<accession>P0DA80</accession>
<accession>P64000</accession>
<accession>Q99XX4</accession>
<name>DTD_STRP3</name>
<reference key="1">
    <citation type="journal article" date="2002" name="Proc. Natl. Acad. Sci. U.S.A.">
        <title>Genome sequence of a serotype M3 strain of group A Streptococcus: phage-encoded toxins, the high-virulence phenotype, and clone emergence.</title>
        <authorList>
            <person name="Beres S.B."/>
            <person name="Sylva G.L."/>
            <person name="Barbian K.D."/>
            <person name="Lei B."/>
            <person name="Hoff J.S."/>
            <person name="Mammarella N.D."/>
            <person name="Liu M.-Y."/>
            <person name="Smoot J.C."/>
            <person name="Porcella S.F."/>
            <person name="Parkins L.D."/>
            <person name="Campbell D.S."/>
            <person name="Smith T.M."/>
            <person name="McCormick J.K."/>
            <person name="Leung D.Y.M."/>
            <person name="Schlievert P.M."/>
            <person name="Musser J.M."/>
        </authorList>
    </citation>
    <scope>NUCLEOTIDE SEQUENCE [LARGE SCALE GENOMIC DNA]</scope>
    <source>
        <strain>ATCC BAA-595 / MGAS315</strain>
    </source>
</reference>
<feature type="chain" id="PRO_0000164604" description="D-aminoacyl-tRNA deacylase">
    <location>
        <begin position="1"/>
        <end position="147"/>
    </location>
</feature>
<feature type="short sequence motif" description="Gly-cisPro motif, important for rejection of L-amino acids" evidence="1">
    <location>
        <begin position="136"/>
        <end position="137"/>
    </location>
</feature>
<comment type="function">
    <text evidence="1">An aminoacyl-tRNA editing enzyme that deacylates mischarged D-aminoacyl-tRNAs. Also deacylates mischarged glycyl-tRNA(Ala), protecting cells against glycine mischarging by AlaRS. Acts via tRNA-based rather than protein-based catalysis; rejects L-amino acids rather than detecting D-amino acids in the active site. By recycling D-aminoacyl-tRNA to D-amino acids and free tRNA molecules, this enzyme counteracts the toxicity associated with the formation of D-aminoacyl-tRNA entities in vivo and helps enforce protein L-homochirality.</text>
</comment>
<comment type="catalytic activity">
    <reaction evidence="1">
        <text>glycyl-tRNA(Ala) + H2O = tRNA(Ala) + glycine + H(+)</text>
        <dbReference type="Rhea" id="RHEA:53744"/>
        <dbReference type="Rhea" id="RHEA-COMP:9657"/>
        <dbReference type="Rhea" id="RHEA-COMP:13640"/>
        <dbReference type="ChEBI" id="CHEBI:15377"/>
        <dbReference type="ChEBI" id="CHEBI:15378"/>
        <dbReference type="ChEBI" id="CHEBI:57305"/>
        <dbReference type="ChEBI" id="CHEBI:78442"/>
        <dbReference type="ChEBI" id="CHEBI:78522"/>
        <dbReference type="EC" id="3.1.1.96"/>
    </reaction>
</comment>
<comment type="catalytic activity">
    <reaction evidence="1">
        <text>a D-aminoacyl-tRNA + H2O = a tRNA + a D-alpha-amino acid + H(+)</text>
        <dbReference type="Rhea" id="RHEA:13953"/>
        <dbReference type="Rhea" id="RHEA-COMP:10123"/>
        <dbReference type="Rhea" id="RHEA-COMP:10124"/>
        <dbReference type="ChEBI" id="CHEBI:15377"/>
        <dbReference type="ChEBI" id="CHEBI:15378"/>
        <dbReference type="ChEBI" id="CHEBI:59871"/>
        <dbReference type="ChEBI" id="CHEBI:78442"/>
        <dbReference type="ChEBI" id="CHEBI:79333"/>
        <dbReference type="EC" id="3.1.1.96"/>
    </reaction>
</comment>
<comment type="subunit">
    <text evidence="1">Homodimer.</text>
</comment>
<comment type="subcellular location">
    <subcellularLocation>
        <location evidence="1">Cytoplasm</location>
    </subcellularLocation>
</comment>
<comment type="domain">
    <text evidence="1">A Gly-cisPro motif from one monomer fits into the active site of the other monomer to allow specific chiral rejection of L-amino acids.</text>
</comment>
<comment type="similarity">
    <text evidence="1">Belongs to the DTD family.</text>
</comment>
<organism>
    <name type="scientific">Streptococcus pyogenes serotype M3 (strain ATCC BAA-595 / MGAS315)</name>
    <dbReference type="NCBI Taxonomy" id="198466"/>
    <lineage>
        <taxon>Bacteria</taxon>
        <taxon>Bacillati</taxon>
        <taxon>Bacillota</taxon>
        <taxon>Bacilli</taxon>
        <taxon>Lactobacillales</taxon>
        <taxon>Streptococcaceae</taxon>
        <taxon>Streptococcus</taxon>
    </lineage>
</organism>
<gene>
    <name evidence="1" type="primary">dtd</name>
    <name type="ordered locus">SpyM3_1700</name>
</gene>
<keyword id="KW-0963">Cytoplasm</keyword>
<keyword id="KW-0378">Hydrolase</keyword>
<keyword id="KW-0694">RNA-binding</keyword>
<keyword id="KW-0820">tRNA-binding</keyword>
<dbReference type="EC" id="3.1.1.96" evidence="1"/>
<dbReference type="EMBL" id="AE014074">
    <property type="protein sequence ID" value="AAM80307.1"/>
    <property type="molecule type" value="Genomic_DNA"/>
</dbReference>
<dbReference type="RefSeq" id="WP_010922691.1">
    <property type="nucleotide sequence ID" value="NC_004070.1"/>
</dbReference>
<dbReference type="SMR" id="P0DA80"/>
<dbReference type="KEGG" id="spg:SpyM3_1700"/>
<dbReference type="HOGENOM" id="CLU_076901_1_0_9"/>
<dbReference type="Proteomes" id="UP000000564">
    <property type="component" value="Chromosome"/>
</dbReference>
<dbReference type="GO" id="GO:0005737">
    <property type="term" value="C:cytoplasm"/>
    <property type="evidence" value="ECO:0007669"/>
    <property type="project" value="UniProtKB-SubCell"/>
</dbReference>
<dbReference type="GO" id="GO:0051500">
    <property type="term" value="F:D-tyrosyl-tRNA(Tyr) deacylase activity"/>
    <property type="evidence" value="ECO:0007669"/>
    <property type="project" value="TreeGrafter"/>
</dbReference>
<dbReference type="GO" id="GO:0106026">
    <property type="term" value="F:Gly-tRNA(Ala) deacylase activity"/>
    <property type="evidence" value="ECO:0007669"/>
    <property type="project" value="UniProtKB-UniRule"/>
</dbReference>
<dbReference type="GO" id="GO:0043908">
    <property type="term" value="F:Ser(Gly)-tRNA(Ala) hydrolase activity"/>
    <property type="evidence" value="ECO:0007669"/>
    <property type="project" value="UniProtKB-UniRule"/>
</dbReference>
<dbReference type="GO" id="GO:0000049">
    <property type="term" value="F:tRNA binding"/>
    <property type="evidence" value="ECO:0007669"/>
    <property type="project" value="UniProtKB-UniRule"/>
</dbReference>
<dbReference type="GO" id="GO:0019478">
    <property type="term" value="P:D-amino acid catabolic process"/>
    <property type="evidence" value="ECO:0007669"/>
    <property type="project" value="UniProtKB-UniRule"/>
</dbReference>
<dbReference type="CDD" id="cd00563">
    <property type="entry name" value="Dtyr_deacylase"/>
    <property type="match status" value="1"/>
</dbReference>
<dbReference type="FunFam" id="3.50.80.10:FF:000001">
    <property type="entry name" value="D-aminoacyl-tRNA deacylase"/>
    <property type="match status" value="1"/>
</dbReference>
<dbReference type="Gene3D" id="3.50.80.10">
    <property type="entry name" value="D-tyrosyl-tRNA(Tyr) deacylase"/>
    <property type="match status" value="1"/>
</dbReference>
<dbReference type="HAMAP" id="MF_00518">
    <property type="entry name" value="Deacylase_Dtd"/>
    <property type="match status" value="1"/>
</dbReference>
<dbReference type="InterPro" id="IPR003732">
    <property type="entry name" value="Daa-tRNA_deacyls_DTD"/>
</dbReference>
<dbReference type="InterPro" id="IPR023509">
    <property type="entry name" value="DTD-like_sf"/>
</dbReference>
<dbReference type="NCBIfam" id="TIGR00256">
    <property type="entry name" value="D-aminoacyl-tRNA deacylase"/>
    <property type="match status" value="1"/>
</dbReference>
<dbReference type="PANTHER" id="PTHR10472:SF5">
    <property type="entry name" value="D-AMINOACYL-TRNA DEACYLASE 1"/>
    <property type="match status" value="1"/>
</dbReference>
<dbReference type="PANTHER" id="PTHR10472">
    <property type="entry name" value="D-TYROSYL-TRNA TYR DEACYLASE"/>
    <property type="match status" value="1"/>
</dbReference>
<dbReference type="Pfam" id="PF02580">
    <property type="entry name" value="Tyr_Deacylase"/>
    <property type="match status" value="1"/>
</dbReference>
<dbReference type="SUPFAM" id="SSF69500">
    <property type="entry name" value="DTD-like"/>
    <property type="match status" value="1"/>
</dbReference>
<evidence type="ECO:0000255" key="1">
    <source>
        <dbReference type="HAMAP-Rule" id="MF_00518"/>
    </source>
</evidence>
<protein>
    <recommendedName>
        <fullName evidence="1">D-aminoacyl-tRNA deacylase</fullName>
        <shortName evidence="1">DTD</shortName>
        <ecNumber evidence="1">3.1.1.96</ecNumber>
    </recommendedName>
    <alternativeName>
        <fullName evidence="1">Gly-tRNA(Ala) deacylase</fullName>
    </alternativeName>
</protein>
<sequence>MKLVLQRVKEASVSIDGKIAGAINQGLLLLVGVGPDDNAEDLAYAVRKIVNMRIFSDADGKMNQSIQDIKGSILSVSQFTLYADTKKGNRPAFTGAAKPDLASQLYDSFNEQLAEFVPVERGVFGADMQVSLINDGPVTIILDTKCH</sequence>
<proteinExistence type="inferred from homology"/>